<name>APAH_LEGPL</name>
<comment type="function">
    <text evidence="1">Hydrolyzes diadenosine 5',5'''-P1,P4-tetraphosphate to yield ADP.</text>
</comment>
<comment type="catalytic activity">
    <reaction evidence="1">
        <text>P(1),P(4)-bis(5'-adenosyl) tetraphosphate + H2O = 2 ADP + 2 H(+)</text>
        <dbReference type="Rhea" id="RHEA:24252"/>
        <dbReference type="ChEBI" id="CHEBI:15377"/>
        <dbReference type="ChEBI" id="CHEBI:15378"/>
        <dbReference type="ChEBI" id="CHEBI:58141"/>
        <dbReference type="ChEBI" id="CHEBI:456216"/>
        <dbReference type="EC" id="3.6.1.41"/>
    </reaction>
</comment>
<comment type="similarity">
    <text evidence="1">Belongs to the Ap4A hydrolase family.</text>
</comment>
<reference key="1">
    <citation type="journal article" date="2004" name="Nat. Genet.">
        <title>Evidence in the Legionella pneumophila genome for exploitation of host cell functions and high genome plasticity.</title>
        <authorList>
            <person name="Cazalet C."/>
            <person name="Rusniok C."/>
            <person name="Brueggemann H."/>
            <person name="Zidane N."/>
            <person name="Magnier A."/>
            <person name="Ma L."/>
            <person name="Tichit M."/>
            <person name="Jarraud S."/>
            <person name="Bouchier C."/>
            <person name="Vandenesch F."/>
            <person name="Kunst F."/>
            <person name="Etienne J."/>
            <person name="Glaser P."/>
            <person name="Buchrieser C."/>
        </authorList>
    </citation>
    <scope>NUCLEOTIDE SEQUENCE [LARGE SCALE GENOMIC DNA]</scope>
    <source>
        <strain>Lens</strain>
    </source>
</reference>
<gene>
    <name evidence="1" type="primary">apaH</name>
    <name type="ordered locus">lpl2853</name>
</gene>
<keyword id="KW-0378">Hydrolase</keyword>
<organism>
    <name type="scientific">Legionella pneumophila (strain Lens)</name>
    <dbReference type="NCBI Taxonomy" id="297245"/>
    <lineage>
        <taxon>Bacteria</taxon>
        <taxon>Pseudomonadati</taxon>
        <taxon>Pseudomonadota</taxon>
        <taxon>Gammaproteobacteria</taxon>
        <taxon>Legionellales</taxon>
        <taxon>Legionellaceae</taxon>
        <taxon>Legionella</taxon>
    </lineage>
</organism>
<accession>Q5WSM5</accession>
<protein>
    <recommendedName>
        <fullName evidence="1">Bis(5'-nucleosyl)-tetraphosphatase, symmetrical</fullName>
        <ecNumber evidence="1">3.6.1.41</ecNumber>
    </recommendedName>
    <alternativeName>
        <fullName evidence="1">Ap4A hydrolase</fullName>
    </alternativeName>
    <alternativeName>
        <fullName evidence="1">Diadenosine 5',5'''-P1,P4-tetraphosphate pyrophosphohydrolase</fullName>
    </alternativeName>
    <alternativeName>
        <fullName evidence="1">Diadenosine tetraphosphatase</fullName>
    </alternativeName>
</protein>
<dbReference type="EC" id="3.6.1.41" evidence="1"/>
<dbReference type="EMBL" id="CR628337">
    <property type="protein sequence ID" value="CAH17097.1"/>
    <property type="molecule type" value="Genomic_DNA"/>
</dbReference>
<dbReference type="RefSeq" id="WP_011216768.1">
    <property type="nucleotide sequence ID" value="NC_006369.1"/>
</dbReference>
<dbReference type="SMR" id="Q5WSM5"/>
<dbReference type="KEGG" id="lpf:lpl2853"/>
<dbReference type="LegioList" id="lpl2853"/>
<dbReference type="HOGENOM" id="CLU_056184_2_0_6"/>
<dbReference type="Proteomes" id="UP000002517">
    <property type="component" value="Chromosome"/>
</dbReference>
<dbReference type="GO" id="GO:0008803">
    <property type="term" value="F:bis(5'-nucleosyl)-tetraphosphatase (symmetrical) activity"/>
    <property type="evidence" value="ECO:0007669"/>
    <property type="project" value="UniProtKB-UniRule"/>
</dbReference>
<dbReference type="CDD" id="cd07422">
    <property type="entry name" value="MPP_ApaH"/>
    <property type="match status" value="1"/>
</dbReference>
<dbReference type="Gene3D" id="3.60.21.10">
    <property type="match status" value="1"/>
</dbReference>
<dbReference type="HAMAP" id="MF_00199">
    <property type="entry name" value="ApaH"/>
    <property type="match status" value="1"/>
</dbReference>
<dbReference type="InterPro" id="IPR004617">
    <property type="entry name" value="ApaH"/>
</dbReference>
<dbReference type="InterPro" id="IPR004843">
    <property type="entry name" value="Calcineurin-like_PHP_ApaH"/>
</dbReference>
<dbReference type="InterPro" id="IPR029052">
    <property type="entry name" value="Metallo-depent_PP-like"/>
</dbReference>
<dbReference type="NCBIfam" id="TIGR00668">
    <property type="entry name" value="apaH"/>
    <property type="match status" value="1"/>
</dbReference>
<dbReference type="NCBIfam" id="NF001204">
    <property type="entry name" value="PRK00166.1"/>
    <property type="match status" value="1"/>
</dbReference>
<dbReference type="PANTHER" id="PTHR40942">
    <property type="match status" value="1"/>
</dbReference>
<dbReference type="PANTHER" id="PTHR40942:SF4">
    <property type="entry name" value="CYTOCHROME C5"/>
    <property type="match status" value="1"/>
</dbReference>
<dbReference type="Pfam" id="PF00149">
    <property type="entry name" value="Metallophos"/>
    <property type="match status" value="1"/>
</dbReference>
<dbReference type="PIRSF" id="PIRSF000903">
    <property type="entry name" value="B5n-ttraPtase_sm"/>
    <property type="match status" value="1"/>
</dbReference>
<dbReference type="SUPFAM" id="SSF56300">
    <property type="entry name" value="Metallo-dependent phosphatases"/>
    <property type="match status" value="1"/>
</dbReference>
<evidence type="ECO:0000255" key="1">
    <source>
        <dbReference type="HAMAP-Rule" id="MF_00199"/>
    </source>
</evidence>
<proteinExistence type="inferred from homology"/>
<sequence length="276" mass="31363">MPDYAIGDIQGCYDPLQRLLELIDFNEKDDCLWFVGDLVNRGPDSLAVLRFIYSLPVKPKITLGNHDLHLLGLLFGGQPWKGHDDTLEEVMLADDGEELGHWLRKQSLLCRSSELNIVMCHAGIAPLWDLSKAVGLANELEAVLSGDSYHEFFAQMYGNKPDIWSDDLVGLDRLRVITNYFTRMRYCDAHGRLDLGYKGTLSKAPNHLYPWFEVPCRKEIEMDIVFGHWAALMGRSSHPRIHAIDTGCLWGGQLTALRLQDRQRFSVPGYGVSRFE</sequence>
<feature type="chain" id="PRO_0000197997" description="Bis(5'-nucleosyl)-tetraphosphatase, symmetrical">
    <location>
        <begin position="1"/>
        <end position="276"/>
    </location>
</feature>